<feature type="chain" id="PRO_0000249111" description="3-ketoacyl-CoA synthase 20">
    <location>
        <begin position="1"/>
        <end position="529"/>
    </location>
</feature>
<feature type="transmembrane region" description="Helical" evidence="2">
    <location>
        <begin position="52"/>
        <end position="72"/>
    </location>
</feature>
<feature type="transmembrane region" description="Helical" evidence="2">
    <location>
        <begin position="84"/>
        <end position="104"/>
    </location>
</feature>
<feature type="domain" description="FAE" evidence="2">
    <location>
        <begin position="103"/>
        <end position="396"/>
    </location>
</feature>
<feature type="region of interest" description="Disordered" evidence="3">
    <location>
        <begin position="1"/>
        <end position="22"/>
    </location>
</feature>
<feature type="active site" evidence="1">
    <location>
        <position position="247"/>
    </location>
</feature>
<feature type="active site" evidence="1">
    <location>
        <position position="326"/>
    </location>
</feature>
<feature type="active site" evidence="1">
    <location>
        <position position="415"/>
    </location>
</feature>
<feature type="active site" evidence="1">
    <location>
        <position position="419"/>
    </location>
</feature>
<feature type="active site" evidence="1">
    <location>
        <position position="452"/>
    </location>
</feature>
<feature type="sequence conflict" description="In Ref. 3; AAK59535." evidence="11" ref="3">
    <original>T</original>
    <variation>A</variation>
    <location>
        <position position="348"/>
    </location>
</feature>
<evidence type="ECO:0000250" key="1">
    <source>
        <dbReference type="UniProtKB" id="Q38860"/>
    </source>
</evidence>
<evidence type="ECO:0000255" key="2"/>
<evidence type="ECO:0000256" key="3">
    <source>
        <dbReference type="SAM" id="MobiDB-lite"/>
    </source>
</evidence>
<evidence type="ECO:0000269" key="4">
    <source>
    </source>
</evidence>
<evidence type="ECO:0000269" key="5">
    <source>
    </source>
</evidence>
<evidence type="ECO:0000269" key="6">
    <source>
    </source>
</evidence>
<evidence type="ECO:0000269" key="7">
    <source>
    </source>
</evidence>
<evidence type="ECO:0000269" key="8">
    <source>
    </source>
</evidence>
<evidence type="ECO:0000269" key="9">
    <source>
    </source>
</evidence>
<evidence type="ECO:0000303" key="10">
    <source>
    </source>
</evidence>
<evidence type="ECO:0000305" key="11"/>
<evidence type="ECO:0000305" key="12">
    <source>
    </source>
</evidence>
<evidence type="ECO:0000312" key="13">
    <source>
        <dbReference type="Araport" id="AT5G43760"/>
    </source>
</evidence>
<evidence type="ECO:0000312" key="14">
    <source>
        <dbReference type="EMBL" id="BAB11304.1"/>
    </source>
</evidence>
<reference key="1">
    <citation type="submission" date="1999-04" db="EMBL/GenBank/DDBJ databases">
        <title>Structural analysis of Arabidopsis thaliana chromosome 5. XI.</title>
        <authorList>
            <person name="Kaneko T."/>
            <person name="Katoh T."/>
            <person name="Asamizu E."/>
            <person name="Sato S."/>
            <person name="Nakamura Y."/>
            <person name="Kotani H."/>
            <person name="Tabata S."/>
        </authorList>
    </citation>
    <scope>NUCLEOTIDE SEQUENCE [LARGE SCALE GENOMIC DNA]</scope>
    <source>
        <strain>cv. Columbia</strain>
    </source>
</reference>
<reference key="2">
    <citation type="journal article" date="2017" name="Plant J.">
        <title>Araport11: a complete reannotation of the Arabidopsis thaliana reference genome.</title>
        <authorList>
            <person name="Cheng C.Y."/>
            <person name="Krishnakumar V."/>
            <person name="Chan A.P."/>
            <person name="Thibaud-Nissen F."/>
            <person name="Schobel S."/>
            <person name="Town C.D."/>
        </authorList>
    </citation>
    <scope>GENOME REANNOTATION</scope>
    <source>
        <strain>cv. Columbia</strain>
    </source>
</reference>
<reference key="3">
    <citation type="journal article" date="2003" name="Science">
        <title>Empirical analysis of transcriptional activity in the Arabidopsis genome.</title>
        <authorList>
            <person name="Yamada K."/>
            <person name="Lim J."/>
            <person name="Dale J.M."/>
            <person name="Chen H."/>
            <person name="Shinn P."/>
            <person name="Palm C.J."/>
            <person name="Southwick A.M."/>
            <person name="Wu H.C."/>
            <person name="Kim C.J."/>
            <person name="Nguyen M."/>
            <person name="Pham P.K."/>
            <person name="Cheuk R.F."/>
            <person name="Karlin-Newmann G."/>
            <person name="Liu S.X."/>
            <person name="Lam B."/>
            <person name="Sakano H."/>
            <person name="Wu T."/>
            <person name="Yu G."/>
            <person name="Miranda M."/>
            <person name="Quach H.L."/>
            <person name="Tripp M."/>
            <person name="Chang C.H."/>
            <person name="Lee J.M."/>
            <person name="Toriumi M.J."/>
            <person name="Chan M.M."/>
            <person name="Tang C.C."/>
            <person name="Onodera C.S."/>
            <person name="Deng J.M."/>
            <person name="Akiyama K."/>
            <person name="Ansari Y."/>
            <person name="Arakawa T."/>
            <person name="Banh J."/>
            <person name="Banno F."/>
            <person name="Bowser L."/>
            <person name="Brooks S.Y."/>
            <person name="Carninci P."/>
            <person name="Chao Q."/>
            <person name="Choy N."/>
            <person name="Enju A."/>
            <person name="Goldsmith A.D."/>
            <person name="Gurjal M."/>
            <person name="Hansen N.F."/>
            <person name="Hayashizaki Y."/>
            <person name="Johnson-Hopson C."/>
            <person name="Hsuan V.W."/>
            <person name="Iida K."/>
            <person name="Karnes M."/>
            <person name="Khan S."/>
            <person name="Koesema E."/>
            <person name="Ishida J."/>
            <person name="Jiang P.X."/>
            <person name="Jones T."/>
            <person name="Kawai J."/>
            <person name="Kamiya A."/>
            <person name="Meyers C."/>
            <person name="Nakajima M."/>
            <person name="Narusaka M."/>
            <person name="Seki M."/>
            <person name="Sakurai T."/>
            <person name="Satou M."/>
            <person name="Tamse R."/>
            <person name="Vaysberg M."/>
            <person name="Wallender E.K."/>
            <person name="Wong C."/>
            <person name="Yamamura Y."/>
            <person name="Yuan S."/>
            <person name="Shinozaki K."/>
            <person name="Davis R.W."/>
            <person name="Theologis A."/>
            <person name="Ecker J.R."/>
        </authorList>
    </citation>
    <scope>NUCLEOTIDE SEQUENCE [LARGE SCALE MRNA]</scope>
    <source>
        <strain>cv. Columbia</strain>
    </source>
</reference>
<reference key="4">
    <citation type="journal article" date="2005" name="Biochim. Biophys. Acta">
        <title>Profiling candidate genes involved in wax biosynthesis in Arabidopsis thaliana by microarray analysis.</title>
        <authorList>
            <person name="Costaglioli P."/>
            <person name="Joubes J."/>
            <person name="Garcia C."/>
            <person name="Stef M."/>
            <person name="Arveiler B."/>
            <person name="Lessire R."/>
            <person name="Garbay B."/>
        </authorList>
    </citation>
    <scope>TISSUE SPECIFICITY</scope>
</reference>
<reference key="5">
    <citation type="journal article" date="2004" name="Proc. Natl. Acad. Sci. U.S.A.">
        <title>Specific and differential inhibition of very-long-chain fatty acid elongases from Arabidopsis thaliana by different herbicides.</title>
        <authorList>
            <person name="Trenkamp S."/>
            <person name="Martin W."/>
            <person name="Tietjen K."/>
        </authorList>
    </citation>
    <scope>FUNCTION</scope>
    <scope>SUBCELLULAR LOCATION</scope>
    <scope>ACTIVITY REGULATION</scope>
</reference>
<reference key="6">
    <citation type="journal article" date="2003" name="Pest Manag. Sci.">
        <title>Flufenacet herbicide treatment phenocopies the fiddlehead mutant in Arabidopsis thaliana.</title>
        <authorList>
            <person name="Lechelt-Kunze C."/>
            <person name="Meissner R.C."/>
            <person name="Drewes M."/>
            <person name="Tietjen K."/>
        </authorList>
    </citation>
    <scope>INDUCTION</scope>
    <scope>GENE FAMILY</scope>
</reference>
<reference key="7">
    <citation type="journal article" date="2008" name="Plant Mol. Biol.">
        <title>The VLCFA elongase gene family in Arabidopsis thaliana: phylogenetic analysis, 3D modelling and expression profiling.</title>
        <authorList>
            <person name="Joubes J."/>
            <person name="Raffaele S."/>
            <person name="Bourdenx B."/>
            <person name="Garcia C."/>
            <person name="Laroche-Traineau J."/>
            <person name="Moreau P."/>
            <person name="Domergue F."/>
            <person name="Lessire R."/>
        </authorList>
    </citation>
    <scope>GENE FAMILY</scope>
    <scope>NOMENCLATURE</scope>
    <scope>3D-STRUCTURE MODELING</scope>
    <scope>TISSUE SPECIFICITY</scope>
    <scope>INDUCTION</scope>
</reference>
<reference key="8">
    <citation type="journal article" date="2009" name="Plant J.">
        <title>Two Arabidopsis 3-ketoacyl CoA synthase genes, KCS20 and KCS2/DAISY, are functionally redundant in cuticular wax and root suberin biosynthesis, but differentially controlled by osmotic stress.</title>
        <authorList>
            <person name="Lee S.B."/>
            <person name="Jung S.J."/>
            <person name="Go Y.S."/>
            <person name="Kim H.U."/>
            <person name="Kim J.K."/>
            <person name="Cho H.J."/>
            <person name="Park O.K."/>
            <person name="Suh M.C."/>
        </authorList>
    </citation>
    <scope>FUNCTION</scope>
    <scope>TISSUE SPECIFICITY</scope>
    <scope>INDUCTION</scope>
    <scope>DISRUPTION PHENOTYPE</scope>
</reference>
<reference key="9">
    <citation type="journal article" date="2012" name="Phytochemistry">
        <title>Inhibition of saturated very-long-chain fatty acid biosynthesis by mefluidide and perfluidone, selective inhibitors of 3-ketoacyl-CoA synthases.</title>
        <authorList>
            <person name="Tresch S."/>
            <person name="Heilmann M."/>
            <person name="Christiansen N."/>
            <person name="Looser R."/>
            <person name="Grossmann K."/>
        </authorList>
    </citation>
    <scope>ACTIVITY REGULATION</scope>
</reference>
<gene>
    <name evidence="10" type="primary">KCS20</name>
    <name evidence="12" type="synonym">KCS19</name>
    <name evidence="13" type="ordered locus">At5g43760</name>
    <name evidence="14" type="ORF">MQD19.11</name>
</gene>
<dbReference type="EC" id="2.3.1.199" evidence="11"/>
<dbReference type="EMBL" id="AB026651">
    <property type="protein sequence ID" value="BAB11304.1"/>
    <property type="molecule type" value="Genomic_DNA"/>
</dbReference>
<dbReference type="EMBL" id="CP002688">
    <property type="protein sequence ID" value="AED95007.1"/>
    <property type="molecule type" value="Genomic_DNA"/>
</dbReference>
<dbReference type="EMBL" id="AF424620">
    <property type="protein sequence ID" value="AAL11613.1"/>
    <property type="molecule type" value="mRNA"/>
</dbReference>
<dbReference type="EMBL" id="AY035030">
    <property type="protein sequence ID" value="AAK59535.1"/>
    <property type="molecule type" value="mRNA"/>
</dbReference>
<dbReference type="EMBL" id="AY150469">
    <property type="protein sequence ID" value="AAN12994.1"/>
    <property type="molecule type" value="mRNA"/>
</dbReference>
<dbReference type="RefSeq" id="NP_199189.1">
    <property type="nucleotide sequence ID" value="NM_123743.4"/>
</dbReference>
<dbReference type="SMR" id="Q9FG87"/>
<dbReference type="BioGRID" id="19648">
    <property type="interactions" value="3"/>
</dbReference>
<dbReference type="FunCoup" id="Q9FG87">
    <property type="interactions" value="205"/>
</dbReference>
<dbReference type="IntAct" id="Q9FG87">
    <property type="interactions" value="3"/>
</dbReference>
<dbReference type="STRING" id="3702.Q9FG87"/>
<dbReference type="ChEMBL" id="CHEMBL2242734"/>
<dbReference type="PaxDb" id="3702-AT5G43760.1"/>
<dbReference type="ProteomicsDB" id="247242"/>
<dbReference type="EnsemblPlants" id="AT5G43760.1">
    <property type="protein sequence ID" value="AT5G43760.1"/>
    <property type="gene ID" value="AT5G43760"/>
</dbReference>
<dbReference type="GeneID" id="834398"/>
<dbReference type="Gramene" id="AT5G43760.1">
    <property type="protein sequence ID" value="AT5G43760.1"/>
    <property type="gene ID" value="AT5G43760"/>
</dbReference>
<dbReference type="KEGG" id="ath:AT5G43760"/>
<dbReference type="Araport" id="AT5G43760"/>
<dbReference type="TAIR" id="AT5G43760">
    <property type="gene designation" value="KCS20"/>
</dbReference>
<dbReference type="eggNOG" id="ENOG502QPKZ">
    <property type="taxonomic scope" value="Eukaryota"/>
</dbReference>
<dbReference type="HOGENOM" id="CLU_013238_2_1_1"/>
<dbReference type="InParanoid" id="Q9FG87"/>
<dbReference type="OMA" id="HTVRTHS"/>
<dbReference type="OrthoDB" id="1055086at2759"/>
<dbReference type="PhylomeDB" id="Q9FG87"/>
<dbReference type="BioCyc" id="ARA:AT5G43760-MONOMER"/>
<dbReference type="UniPathway" id="UPA00094"/>
<dbReference type="PRO" id="PR:Q9FG87"/>
<dbReference type="Proteomes" id="UP000006548">
    <property type="component" value="Chromosome 5"/>
</dbReference>
<dbReference type="ExpressionAtlas" id="Q9FG87">
    <property type="expression patterns" value="baseline and differential"/>
</dbReference>
<dbReference type="GO" id="GO:0016020">
    <property type="term" value="C:membrane"/>
    <property type="evidence" value="ECO:0007669"/>
    <property type="project" value="UniProtKB-SubCell"/>
</dbReference>
<dbReference type="GO" id="GO:0009922">
    <property type="term" value="F:fatty acid elongase activity"/>
    <property type="evidence" value="ECO:0000314"/>
    <property type="project" value="TAIR"/>
</dbReference>
<dbReference type="GO" id="GO:0006633">
    <property type="term" value="P:fatty acid biosynthetic process"/>
    <property type="evidence" value="ECO:0007669"/>
    <property type="project" value="UniProtKB-UniPathway"/>
</dbReference>
<dbReference type="GO" id="GO:0009409">
    <property type="term" value="P:response to cold"/>
    <property type="evidence" value="ECO:0000270"/>
    <property type="project" value="TAIR"/>
</dbReference>
<dbReference type="GO" id="GO:0009416">
    <property type="term" value="P:response to light stimulus"/>
    <property type="evidence" value="ECO:0000270"/>
    <property type="project" value="TAIR"/>
</dbReference>
<dbReference type="CDD" id="cd00831">
    <property type="entry name" value="CHS_like"/>
    <property type="match status" value="1"/>
</dbReference>
<dbReference type="FunFam" id="3.40.47.10:FF:000028">
    <property type="entry name" value="3-ketoacyl-CoA synthase"/>
    <property type="match status" value="1"/>
</dbReference>
<dbReference type="Gene3D" id="3.40.47.10">
    <property type="match status" value="1"/>
</dbReference>
<dbReference type="InterPro" id="IPR012392">
    <property type="entry name" value="3-ktacl-CoA_syn"/>
</dbReference>
<dbReference type="InterPro" id="IPR013747">
    <property type="entry name" value="ACP_syn_III_C"/>
</dbReference>
<dbReference type="InterPro" id="IPR013601">
    <property type="entry name" value="FAE1_typ3_polyketide_synth"/>
</dbReference>
<dbReference type="InterPro" id="IPR016039">
    <property type="entry name" value="Thiolase-like"/>
</dbReference>
<dbReference type="PANTHER" id="PTHR31561">
    <property type="entry name" value="3-KETOACYL-COA SYNTHASE"/>
    <property type="match status" value="1"/>
</dbReference>
<dbReference type="Pfam" id="PF08541">
    <property type="entry name" value="ACP_syn_III_C"/>
    <property type="match status" value="1"/>
</dbReference>
<dbReference type="Pfam" id="PF08392">
    <property type="entry name" value="FAE1_CUT1_RppA"/>
    <property type="match status" value="1"/>
</dbReference>
<dbReference type="PIRSF" id="PIRSF036417">
    <property type="entry name" value="3-ktacl-CoA_syn"/>
    <property type="match status" value="1"/>
</dbReference>
<dbReference type="SUPFAM" id="SSF53901">
    <property type="entry name" value="Thiolase-like"/>
    <property type="match status" value="2"/>
</dbReference>
<protein>
    <recommendedName>
        <fullName evidence="10">3-ketoacyl-CoA synthase 20</fullName>
        <shortName evidence="10">KCS-20</shortName>
        <ecNumber evidence="11">2.3.1.199</ecNumber>
    </recommendedName>
    <alternativeName>
        <fullName evidence="10">Very long-chain fatty acid condensing enzyme 20</fullName>
        <shortName evidence="10">VLCFA condensing enzyme 20</shortName>
    </alternativeName>
</protein>
<keyword id="KW-0012">Acyltransferase</keyword>
<keyword id="KW-0472">Membrane</keyword>
<keyword id="KW-1185">Reference proteome</keyword>
<keyword id="KW-0808">Transferase</keyword>
<keyword id="KW-0812">Transmembrane</keyword>
<keyword id="KW-1133">Transmembrane helix</keyword>
<organism>
    <name type="scientific">Arabidopsis thaliana</name>
    <name type="common">Mouse-ear cress</name>
    <dbReference type="NCBI Taxonomy" id="3702"/>
    <lineage>
        <taxon>Eukaryota</taxon>
        <taxon>Viridiplantae</taxon>
        <taxon>Streptophyta</taxon>
        <taxon>Embryophyta</taxon>
        <taxon>Tracheophyta</taxon>
        <taxon>Spermatophyta</taxon>
        <taxon>Magnoliopsida</taxon>
        <taxon>eudicotyledons</taxon>
        <taxon>Gunneridae</taxon>
        <taxon>Pentapetalae</taxon>
        <taxon>rosids</taxon>
        <taxon>malvids</taxon>
        <taxon>Brassicales</taxon>
        <taxon>Brassicaceae</taxon>
        <taxon>Camelineae</taxon>
        <taxon>Arabidopsis</taxon>
    </lineage>
</organism>
<proteinExistence type="evidence at transcript level"/>
<accession>Q9FG87</accession>
<accession>Q94CA1</accession>
<sequence length="529" mass="59307">MSHNQNQPHRPVPVHVTNAEPNPNPNNLPNFLLSVRLKYVKLGYHYLISNALYILLLPLLAATIANLSSFTINDLSLLYNTLRFHFLSATLATALLISLSTAYFTTRPRRVFLLDFSCYKPDPSLICTRETFMDRSQRVGIFTEDNLAFQQKILERSGLGQKTYFPEALLRVPPNPCMEEARKEAETVMFGAIDAVLEKTGVKPKDIGILVVNCSLFNPTPSLSAMIVNKYKLRGNILSYNLGGMGCSAGLISIDLAKQMLQVQPNSYALVVSTENITLNWYLGNDRSMLLSNCIFRMGGAAVLLSNRSSDRSRSKYQLIHTVRTHKGADDNAFGCVYQREDNNAEETGKIGVSLSKNLMAIAGEALKTNITTLGPLVLPMSEQLLFFATLVARKVFKVKKIKPYIPDFKLAFEHFCIHAGGRAVLDEIEKNLDLSEWHMEPSRMTLNRFGNTSSSSLWYELAYSEAKGRIKRGDRTWQIAFGSGFKCNSAVWKALRTIDPMDEKTNPWIDEIDDFPVQVPRITPITSS</sequence>
<name>KCS20_ARATH</name>
<comment type="function">
    <text evidence="5 8">Mediates the synthesis of VLCFAs from 22 to 26 carbons in length (e.g. C22, C24, C26) (PubMed:15277688). Functionally redundant with KCS2 in the two-carbon elongation of C22 fatty acids that is required for cuticular wax and root suberin biosynthesis (PubMed:19619160).</text>
</comment>
<comment type="catalytic activity">
    <reaction evidence="11">
        <text>a very-long-chain acyl-CoA + malonyl-CoA + H(+) = a very-long-chain 3-oxoacyl-CoA + CO2 + CoA</text>
        <dbReference type="Rhea" id="RHEA:32727"/>
        <dbReference type="ChEBI" id="CHEBI:15378"/>
        <dbReference type="ChEBI" id="CHEBI:16526"/>
        <dbReference type="ChEBI" id="CHEBI:57287"/>
        <dbReference type="ChEBI" id="CHEBI:57384"/>
        <dbReference type="ChEBI" id="CHEBI:90725"/>
        <dbReference type="ChEBI" id="CHEBI:90736"/>
        <dbReference type="EC" id="2.3.1.199"/>
    </reaction>
</comment>
<comment type="activity regulation">
    <text evidence="5 9">Inhibited by K3 herbicides such as alachlor, allidochlor, anilofos, cafenstrole, fentrazamide and flufenacet (PubMed:15277688). Strongly inhibited by metazachlor and only slightly by mefluidide (PubMed:22284369).</text>
</comment>
<comment type="pathway">
    <text>Lipid metabolism; fatty acid biosynthesis.</text>
</comment>
<comment type="subcellular location">
    <subcellularLocation>
        <location evidence="5">Membrane</location>
        <topology evidence="5">Multi-pass membrane protein</topology>
    </subcellularLocation>
</comment>
<comment type="tissue specificity">
    <text evidence="6 7 8">Expressed in aerial organs (PubMed:15914083). Expressed in leaves, flowers, siliques and stems (PubMed:18465198). Expressed in roots, young seedlings, leaves, flowers and siliques (PubMed:19619160).</text>
</comment>
<comment type="induction">
    <text evidence="4 7 8">Repressed by herbicides such as flufenacet and benfuresate (PubMed:12916765). Down-regulated by darkness and low temperature, and up-regulated by drought and osmotic stress (PubMed:18465198). Up-regulated twofold by drought, but no effect of other stress treatments (PubMed:19619160).</text>
</comment>
<comment type="disruption phenotype">
    <text evidence="8">No visible phenotype, but reduced root growth. Kcs2 and kcs20 double mutants have a glossy green appearance due to a significant reduction of the amount of epicuticular wax crystals on the stems and siliques, a significant reduction of C22 and C24 VLCFA derivatives in aliphatic suberin and a roots growth retardation and abnormal lamellation of the suberin layer in the endodermis.</text>
</comment>
<comment type="similarity">
    <text evidence="11">Belongs to the thiolase-like superfamily. Chalcone/stilbene synthases family.</text>
</comment>